<reference key="1">
    <citation type="journal article" date="2011" name="J. Bacteriol.">
        <title>Comparative genomics of 28 Salmonella enterica isolates: evidence for CRISPR-mediated adaptive sublineage evolution.</title>
        <authorList>
            <person name="Fricke W.F."/>
            <person name="Mammel M.K."/>
            <person name="McDermott P.F."/>
            <person name="Tartera C."/>
            <person name="White D.G."/>
            <person name="Leclerc J.E."/>
            <person name="Ravel J."/>
            <person name="Cebula T.A."/>
        </authorList>
    </citation>
    <scope>NUCLEOTIDE SEQUENCE [LARGE SCALE GENOMIC DNA]</scope>
    <source>
        <strain>CT_02021853</strain>
    </source>
</reference>
<gene>
    <name evidence="1" type="primary">mdtH</name>
    <name type="ordered locus">SeD_A2206</name>
</gene>
<evidence type="ECO:0000255" key="1">
    <source>
        <dbReference type="HAMAP-Rule" id="MF_01529"/>
    </source>
</evidence>
<feature type="chain" id="PRO_1000200805" description="Multidrug resistance protein MdtH">
    <location>
        <begin position="1"/>
        <end position="402"/>
    </location>
</feature>
<feature type="topological domain" description="Cytoplasmic" evidence="1">
    <location>
        <begin position="1"/>
        <end position="12"/>
    </location>
</feature>
<feature type="transmembrane region" description="Helical" evidence="1">
    <location>
        <begin position="13"/>
        <end position="33"/>
    </location>
</feature>
<feature type="topological domain" description="Periplasmic" evidence="1">
    <location>
        <begin position="34"/>
        <end position="98"/>
    </location>
</feature>
<feature type="transmembrane region" description="Helical" evidence="1">
    <location>
        <begin position="99"/>
        <end position="116"/>
    </location>
</feature>
<feature type="topological domain" description="Cytoplasmic" evidence="1">
    <location>
        <begin position="117"/>
        <end position="138"/>
    </location>
</feature>
<feature type="transmembrane region" description="Helical" evidence="1">
    <location>
        <begin position="139"/>
        <end position="159"/>
    </location>
</feature>
<feature type="topological domain" description="Periplasmic" evidence="1">
    <location>
        <begin position="160"/>
        <end position="164"/>
    </location>
</feature>
<feature type="transmembrane region" description="Helical" evidence="1">
    <location>
        <begin position="165"/>
        <end position="185"/>
    </location>
</feature>
<feature type="topological domain" description="Cytoplasmic" evidence="1">
    <location>
        <begin position="186"/>
        <end position="213"/>
    </location>
</feature>
<feature type="transmembrane region" description="Helical" evidence="1">
    <location>
        <begin position="214"/>
        <end position="234"/>
    </location>
</feature>
<feature type="topological domain" description="Periplasmic" evidence="1">
    <location>
        <begin position="235"/>
        <end position="243"/>
    </location>
</feature>
<feature type="transmembrane region" description="Helical" evidence="1">
    <location>
        <begin position="244"/>
        <end position="264"/>
    </location>
</feature>
<feature type="topological domain" description="Cytoplasmic" evidence="1">
    <location>
        <begin position="265"/>
        <end position="276"/>
    </location>
</feature>
<feature type="transmembrane region" description="Helical" evidence="1">
    <location>
        <begin position="277"/>
        <end position="297"/>
    </location>
</feature>
<feature type="topological domain" description="Periplasmic" evidence="1">
    <location>
        <begin position="298"/>
        <end position="299"/>
    </location>
</feature>
<feature type="transmembrane region" description="Helical" evidence="1">
    <location>
        <begin position="300"/>
        <end position="320"/>
    </location>
</feature>
<feature type="topological domain" description="Cytoplasmic" evidence="1">
    <location>
        <begin position="321"/>
        <end position="339"/>
    </location>
</feature>
<feature type="transmembrane region" description="Helical" evidence="1">
    <location>
        <begin position="340"/>
        <end position="360"/>
    </location>
</feature>
<feature type="topological domain" description="Periplasmic" evidence="1">
    <location>
        <begin position="361"/>
        <end position="367"/>
    </location>
</feature>
<feature type="transmembrane region" description="Helical" evidence="1">
    <location>
        <begin position="368"/>
        <end position="388"/>
    </location>
</feature>
<feature type="topological domain" description="Cytoplasmic" evidence="1">
    <location>
        <begin position="389"/>
        <end position="402"/>
    </location>
</feature>
<sequence length="402" mass="44384">MSRVSQARNLGKYFLLIDNMLVVLGFFVVFPLISIRFVDQMGWAAVMVGIALGLRQFIQQGLGIFGGAIADRFGAKPMIVTGMLMRAAGFATMGIAHEPWLLWFSCFLSGLGGTLFDPPRSALVVKLIRPEQRGRFFSLLMMQDSAGAVIGALLGSWLLQYDFRLVCATGAILFILCALFNAWLLPAWKLSTVRTPVREGMRRVMSDKRFVTYVLTLAGYYMLAVQVMLMLPIMVNDIAGSPAAVKWMYAIEACLSLTLLYPIARWSEKRFRLEHRLMAGLLVMSLSMLPIGMVGNLQQLFTLICAFYIGSVIAEPARETLSASLADARARGSYMGFSRLGLAIGGAIGYIGGGWLFDMGKALAQPELPWMMLGIIGFITFLALGWQFSHKRTPRRMLEPGA</sequence>
<accession>B5FKZ8</accession>
<name>MDTH_SALDC</name>
<organism>
    <name type="scientific">Salmonella dublin (strain CT_02021853)</name>
    <dbReference type="NCBI Taxonomy" id="439851"/>
    <lineage>
        <taxon>Bacteria</taxon>
        <taxon>Pseudomonadati</taxon>
        <taxon>Pseudomonadota</taxon>
        <taxon>Gammaproteobacteria</taxon>
        <taxon>Enterobacterales</taxon>
        <taxon>Enterobacteriaceae</taxon>
        <taxon>Salmonella</taxon>
    </lineage>
</organism>
<keyword id="KW-0997">Cell inner membrane</keyword>
<keyword id="KW-1003">Cell membrane</keyword>
<keyword id="KW-0472">Membrane</keyword>
<keyword id="KW-0812">Transmembrane</keyword>
<keyword id="KW-1133">Transmembrane helix</keyword>
<keyword id="KW-0813">Transport</keyword>
<proteinExistence type="inferred from homology"/>
<dbReference type="EMBL" id="CP001144">
    <property type="protein sequence ID" value="ACH75435.1"/>
    <property type="molecule type" value="Genomic_DNA"/>
</dbReference>
<dbReference type="RefSeq" id="WP_000092178.1">
    <property type="nucleotide sequence ID" value="NC_011205.1"/>
</dbReference>
<dbReference type="SMR" id="B5FKZ8"/>
<dbReference type="KEGG" id="sed:SeD_A2206"/>
<dbReference type="HOGENOM" id="CLU_001265_60_2_6"/>
<dbReference type="Proteomes" id="UP000008322">
    <property type="component" value="Chromosome"/>
</dbReference>
<dbReference type="GO" id="GO:0005886">
    <property type="term" value="C:plasma membrane"/>
    <property type="evidence" value="ECO:0007669"/>
    <property type="project" value="UniProtKB-SubCell"/>
</dbReference>
<dbReference type="GO" id="GO:0022857">
    <property type="term" value="F:transmembrane transporter activity"/>
    <property type="evidence" value="ECO:0007669"/>
    <property type="project" value="UniProtKB-UniRule"/>
</dbReference>
<dbReference type="CDD" id="cd17329">
    <property type="entry name" value="MFS_MdtH_MDR_like"/>
    <property type="match status" value="1"/>
</dbReference>
<dbReference type="FunFam" id="1.20.1250.20:FF:000039">
    <property type="entry name" value="Multidrug resistance protein MdtH"/>
    <property type="match status" value="1"/>
</dbReference>
<dbReference type="Gene3D" id="1.20.1250.20">
    <property type="entry name" value="MFS general substrate transporter like domains"/>
    <property type="match status" value="1"/>
</dbReference>
<dbReference type="HAMAP" id="MF_01529">
    <property type="entry name" value="MFS_MdtH"/>
    <property type="match status" value="1"/>
</dbReference>
<dbReference type="InterPro" id="IPR011701">
    <property type="entry name" value="MFS"/>
</dbReference>
<dbReference type="InterPro" id="IPR020846">
    <property type="entry name" value="MFS_dom"/>
</dbReference>
<dbReference type="InterPro" id="IPR036259">
    <property type="entry name" value="MFS_trans_sf"/>
</dbReference>
<dbReference type="InterPro" id="IPR050171">
    <property type="entry name" value="MFS_Transporters"/>
</dbReference>
<dbReference type="InterPro" id="IPR022855">
    <property type="entry name" value="Multidrug-R_MdtH"/>
</dbReference>
<dbReference type="NCBIfam" id="NF008650">
    <property type="entry name" value="PRK11646.1"/>
    <property type="match status" value="1"/>
</dbReference>
<dbReference type="PANTHER" id="PTHR23517:SF2">
    <property type="entry name" value="MULTIDRUG RESISTANCE PROTEIN MDTH"/>
    <property type="match status" value="1"/>
</dbReference>
<dbReference type="PANTHER" id="PTHR23517">
    <property type="entry name" value="RESISTANCE PROTEIN MDTM, PUTATIVE-RELATED-RELATED"/>
    <property type="match status" value="1"/>
</dbReference>
<dbReference type="Pfam" id="PF07690">
    <property type="entry name" value="MFS_1"/>
    <property type="match status" value="1"/>
</dbReference>
<dbReference type="SUPFAM" id="SSF103473">
    <property type="entry name" value="MFS general substrate transporter"/>
    <property type="match status" value="1"/>
</dbReference>
<dbReference type="PROSITE" id="PS50850">
    <property type="entry name" value="MFS"/>
    <property type="match status" value="1"/>
</dbReference>
<protein>
    <recommendedName>
        <fullName evidence="1">Multidrug resistance protein MdtH</fullName>
    </recommendedName>
</protein>
<comment type="subcellular location">
    <subcellularLocation>
        <location evidence="1">Cell inner membrane</location>
        <topology evidence="1">Multi-pass membrane protein</topology>
    </subcellularLocation>
</comment>
<comment type="similarity">
    <text evidence="1">Belongs to the major facilitator superfamily. DHA1 family. MdtH (TC 2.A.1.2.21) subfamily.</text>
</comment>